<sequence length="163" mass="18099">MEAGSWAPRRWPRPPGIVLLALASVLSSLLSSGQARVYSRCELARVLQDFGLEGYRGYSLADWICLAYFASGFNTGAVDHEADGSTNSGIFQINSRKWCKNLNPNVPNLCQMYCSDLLNPNLKDTVICAMKITQEPQGLGSWEAWRHHCQGKDLSDWVDGCEL</sequence>
<dbReference type="EMBL" id="BC149686">
    <property type="protein sequence ID" value="AAI49687.1"/>
    <property type="molecule type" value="mRNA"/>
</dbReference>
<dbReference type="RefSeq" id="NP_001098477.1">
    <property type="nucleotide sequence ID" value="NM_001105007.1"/>
</dbReference>
<dbReference type="RefSeq" id="XP_024836252.1">
    <property type="nucleotide sequence ID" value="XM_024980484.2"/>
</dbReference>
<dbReference type="SMR" id="A6QQ77"/>
<dbReference type="CORUM" id="A6QQ77"/>
<dbReference type="FunCoup" id="A6QQ77">
    <property type="interactions" value="209"/>
</dbReference>
<dbReference type="STRING" id="9913.ENSBTAP00000000449"/>
<dbReference type="CAZy" id="GH22">
    <property type="family name" value="Glycoside Hydrolase Family 22"/>
</dbReference>
<dbReference type="PaxDb" id="9913-ENSBTAP00000000449"/>
<dbReference type="Ensembl" id="ENSBTAT00000000449.5">
    <property type="protein sequence ID" value="ENSBTAP00000000449.5"/>
    <property type="gene ID" value="ENSBTAG00000000344.6"/>
</dbReference>
<dbReference type="GeneID" id="617955"/>
<dbReference type="KEGG" id="bta:617955"/>
<dbReference type="CTD" id="124912"/>
<dbReference type="VEuPathDB" id="HostDB:ENSBTAG00000000344"/>
<dbReference type="VGNC" id="VGNC:55872">
    <property type="gene designation" value="SPACA3"/>
</dbReference>
<dbReference type="eggNOG" id="ENOG502S1F5">
    <property type="taxonomic scope" value="Eukaryota"/>
</dbReference>
<dbReference type="GeneTree" id="ENSGT00940000161810"/>
<dbReference type="HOGENOM" id="CLU_111620_1_2_1"/>
<dbReference type="InParanoid" id="A6QQ77"/>
<dbReference type="OMA" id="MYCTDLL"/>
<dbReference type="OrthoDB" id="17373at2759"/>
<dbReference type="Proteomes" id="UP000009136">
    <property type="component" value="Chromosome 19"/>
</dbReference>
<dbReference type="Bgee" id="ENSBTAG00000000344">
    <property type="expression patterns" value="Expressed in spermatid and 24 other cell types or tissues"/>
</dbReference>
<dbReference type="GO" id="GO:0001669">
    <property type="term" value="C:acrosomal vesicle"/>
    <property type="evidence" value="ECO:0000318"/>
    <property type="project" value="GO_Central"/>
</dbReference>
<dbReference type="GO" id="GO:0005576">
    <property type="term" value="C:extracellular region"/>
    <property type="evidence" value="ECO:0007669"/>
    <property type="project" value="UniProtKB-SubCell"/>
</dbReference>
<dbReference type="GO" id="GO:0036126">
    <property type="term" value="C:sperm flagellum"/>
    <property type="evidence" value="ECO:0000318"/>
    <property type="project" value="GO_Central"/>
</dbReference>
<dbReference type="GO" id="GO:0003796">
    <property type="term" value="F:lysozyme activity"/>
    <property type="evidence" value="ECO:0007669"/>
    <property type="project" value="InterPro"/>
</dbReference>
<dbReference type="GO" id="GO:0007342">
    <property type="term" value="P:fusion of sperm to egg plasma membrane involved in single fertilization"/>
    <property type="evidence" value="ECO:0000318"/>
    <property type="project" value="GO_Central"/>
</dbReference>
<dbReference type="CDD" id="cd16897">
    <property type="entry name" value="LYZ_C"/>
    <property type="match status" value="1"/>
</dbReference>
<dbReference type="FunFam" id="1.10.530.10:FF:000001">
    <property type="entry name" value="Lysozyme C"/>
    <property type="match status" value="1"/>
</dbReference>
<dbReference type="Gene3D" id="1.10.530.10">
    <property type="match status" value="1"/>
</dbReference>
<dbReference type="InterPro" id="IPR001916">
    <property type="entry name" value="Glyco_hydro_22"/>
</dbReference>
<dbReference type="InterPro" id="IPR019799">
    <property type="entry name" value="Glyco_hydro_22_CS"/>
</dbReference>
<dbReference type="InterPro" id="IPR000974">
    <property type="entry name" value="Glyco_hydro_22_lys"/>
</dbReference>
<dbReference type="InterPro" id="IPR023346">
    <property type="entry name" value="Lysozyme-like_dom_sf"/>
</dbReference>
<dbReference type="PANTHER" id="PTHR11407">
    <property type="entry name" value="LYSOZYME C"/>
    <property type="match status" value="1"/>
</dbReference>
<dbReference type="PANTHER" id="PTHR11407:SF25">
    <property type="entry name" value="SPERM ACROSOME MEMBRANE-ASSOCIATED PROTEIN 3"/>
    <property type="match status" value="1"/>
</dbReference>
<dbReference type="Pfam" id="PF00062">
    <property type="entry name" value="Lys"/>
    <property type="match status" value="1"/>
</dbReference>
<dbReference type="PRINTS" id="PR00137">
    <property type="entry name" value="LYSOZYME"/>
</dbReference>
<dbReference type="PRINTS" id="PR00135">
    <property type="entry name" value="LYZLACT"/>
</dbReference>
<dbReference type="SMART" id="SM00263">
    <property type="entry name" value="LYZ1"/>
    <property type="match status" value="1"/>
</dbReference>
<dbReference type="SUPFAM" id="SSF53955">
    <property type="entry name" value="Lysozyme-like"/>
    <property type="match status" value="1"/>
</dbReference>
<dbReference type="PROSITE" id="PS00128">
    <property type="entry name" value="GLYCOSYL_HYDROL_F22_1"/>
    <property type="match status" value="1"/>
</dbReference>
<dbReference type="PROSITE" id="PS51348">
    <property type="entry name" value="GLYCOSYL_HYDROL_F22_2"/>
    <property type="match status" value="1"/>
</dbReference>
<name>SACA3_BOVIN</name>
<evidence type="ECO:0000250" key="1"/>
<evidence type="ECO:0000255" key="2"/>
<evidence type="ECO:0000255" key="3">
    <source>
        <dbReference type="PROSITE-ProRule" id="PRU00680"/>
    </source>
</evidence>
<evidence type="ECO:0000305" key="4"/>
<comment type="function">
    <text evidence="1">Sperm surface membrane protein that may be involved in sperm-egg plasma membrane adhesion and fusion during fertilization. It could be a potential receptor for the egg oligosaccharide residue N-acetylglucosamine, which is present in the extracellular matrix over the egg plasma membrane. The processed form has no detectable bacteriolytic activity in vitro (By similarity).</text>
</comment>
<comment type="subunit">
    <text evidence="1">Interacts with ASTL.</text>
</comment>
<comment type="subcellular location">
    <subcellularLocation>
        <location evidence="4">Secreted</location>
    </subcellularLocation>
</comment>
<comment type="similarity">
    <text evidence="3">Belongs to the glycosyl hydrolase 22 family.</text>
</comment>
<comment type="caution">
    <text evidence="4">Although it belongs to the glycosyl hydrolase 22 family, Ala-70 and Asn-87 are present instead of the conserved Glu and Asp which are active site residues. It is therefore expected that this protein lacks hydrolase activity.</text>
</comment>
<organism>
    <name type="scientific">Bos taurus</name>
    <name type="common">Bovine</name>
    <dbReference type="NCBI Taxonomy" id="9913"/>
    <lineage>
        <taxon>Eukaryota</taxon>
        <taxon>Metazoa</taxon>
        <taxon>Chordata</taxon>
        <taxon>Craniata</taxon>
        <taxon>Vertebrata</taxon>
        <taxon>Euteleostomi</taxon>
        <taxon>Mammalia</taxon>
        <taxon>Eutheria</taxon>
        <taxon>Laurasiatheria</taxon>
        <taxon>Artiodactyla</taxon>
        <taxon>Ruminantia</taxon>
        <taxon>Pecora</taxon>
        <taxon>Bovidae</taxon>
        <taxon>Bovinae</taxon>
        <taxon>Bos</taxon>
    </lineage>
</organism>
<accession>A6QQ77</accession>
<feature type="signal peptide" evidence="2">
    <location>
        <begin position="1"/>
        <end position="35"/>
    </location>
</feature>
<feature type="chain" id="PRO_0000375078" description="Sperm acrosome membrane-associated protein 3">
    <location>
        <begin position="36"/>
        <end position="163"/>
    </location>
</feature>
<feature type="domain" description="C-type lysozyme" evidence="3">
    <location>
        <begin position="36"/>
        <end position="163"/>
    </location>
</feature>
<feature type="disulfide bond" evidence="3">
    <location>
        <begin position="41"/>
        <end position="161"/>
    </location>
</feature>
<feature type="disulfide bond" evidence="3">
    <location>
        <begin position="65"/>
        <end position="149"/>
    </location>
</feature>
<feature type="disulfide bond" evidence="3">
    <location>
        <begin position="99"/>
        <end position="114"/>
    </location>
</feature>
<feature type="disulfide bond" evidence="3">
    <location>
        <begin position="110"/>
        <end position="128"/>
    </location>
</feature>
<proteinExistence type="evidence at transcript level"/>
<reference key="1">
    <citation type="submission" date="2007-07" db="EMBL/GenBank/DDBJ databases">
        <authorList>
            <consortium name="NIH - Mammalian Gene Collection (MGC) project"/>
        </authorList>
    </citation>
    <scope>NUCLEOTIDE SEQUENCE [LARGE SCALE MRNA]</scope>
    <source>
        <strain>Crossbred X Angus</strain>
        <tissue>Liver</tissue>
    </source>
</reference>
<keyword id="KW-1015">Disulfide bond</keyword>
<keyword id="KW-1185">Reference proteome</keyword>
<keyword id="KW-0964">Secreted</keyword>
<keyword id="KW-0732">Signal</keyword>
<gene>
    <name type="primary">SPACA3</name>
</gene>
<protein>
    <recommendedName>
        <fullName>Sperm acrosome membrane-associated protein 3</fullName>
    </recommendedName>
</protein>